<reference key="1">
    <citation type="submission" date="2008-01" db="EMBL/GenBank/DDBJ databases">
        <title>Complete sequence of Thermoanaerobacter pseudethanolicus 39E.</title>
        <authorList>
            <person name="Copeland A."/>
            <person name="Lucas S."/>
            <person name="Lapidus A."/>
            <person name="Barry K."/>
            <person name="Glavina del Rio T."/>
            <person name="Dalin E."/>
            <person name="Tice H."/>
            <person name="Pitluck S."/>
            <person name="Bruce D."/>
            <person name="Goodwin L."/>
            <person name="Saunders E."/>
            <person name="Brettin T."/>
            <person name="Detter J.C."/>
            <person name="Han C."/>
            <person name="Schmutz J."/>
            <person name="Larimer F."/>
            <person name="Land M."/>
            <person name="Hauser L."/>
            <person name="Kyrpides N."/>
            <person name="Lykidis A."/>
            <person name="Hemme C."/>
            <person name="Fields M.W."/>
            <person name="He Z."/>
            <person name="Zhou J."/>
            <person name="Richardson P."/>
        </authorList>
    </citation>
    <scope>NUCLEOTIDE SEQUENCE [LARGE SCALE GENOMIC DNA]</scope>
    <source>
        <strain>ATCC 33223 / DSM 2355 / 39E</strain>
    </source>
</reference>
<protein>
    <recommendedName>
        <fullName evidence="1">Probable cell division protein WhiA</fullName>
    </recommendedName>
</protein>
<evidence type="ECO:0000255" key="1">
    <source>
        <dbReference type="HAMAP-Rule" id="MF_01420"/>
    </source>
</evidence>
<sequence length="318" mass="36100">MSFSSDTKDELARIYPEEEESKIAELAALIRTIGSISMYGNGKISLTFTTENASVARLVFKLIKDLFGIIPETMVRRGRYLKKTLSYLIFVPDTKIAEEILGKVKILNYEKGHIKLNYGIDQKIVKNSKAKKAYLRGAFLGGGSISDPEKAYHMEFITHNLEHGKDLSKLINSFDLNSKVIARKNNYVVYLKEGEQIVDVLNIMGAHSALLNLENIRVYKEMRNNVNRIVNCETANLTKTINASLRQIESINYIKETVGLDYLPPNLKEVAELRINYPDLSLKELGQMLVPPVGKSGVNHRLRKIEEISKKLKERRVQ</sequence>
<organism>
    <name type="scientific">Thermoanaerobacter pseudethanolicus (strain ATCC 33223 / 39E)</name>
    <name type="common">Clostridium thermohydrosulfuricum</name>
    <dbReference type="NCBI Taxonomy" id="340099"/>
    <lineage>
        <taxon>Bacteria</taxon>
        <taxon>Bacillati</taxon>
        <taxon>Bacillota</taxon>
        <taxon>Clostridia</taxon>
        <taxon>Thermoanaerobacterales</taxon>
        <taxon>Thermoanaerobacteraceae</taxon>
        <taxon>Thermoanaerobacter</taxon>
    </lineage>
</organism>
<gene>
    <name evidence="1" type="primary">whiA</name>
    <name type="ordered locus">Teth39_0678</name>
</gene>
<name>WHIA_THEP3</name>
<accession>B0K7U2</accession>
<feature type="chain" id="PRO_0000376604" description="Probable cell division protein WhiA">
    <location>
        <begin position="1"/>
        <end position="318"/>
    </location>
</feature>
<feature type="DNA-binding region" description="H-T-H motif" evidence="1">
    <location>
        <begin position="281"/>
        <end position="314"/>
    </location>
</feature>
<proteinExistence type="inferred from homology"/>
<comment type="function">
    <text evidence="1">Involved in cell division and chromosome segregation.</text>
</comment>
<comment type="similarity">
    <text evidence="1">Belongs to the WhiA family.</text>
</comment>
<dbReference type="EMBL" id="CP000924">
    <property type="protein sequence ID" value="ABY94341.1"/>
    <property type="molecule type" value="Genomic_DNA"/>
</dbReference>
<dbReference type="RefSeq" id="WP_012269129.1">
    <property type="nucleotide sequence ID" value="NC_010321.1"/>
</dbReference>
<dbReference type="SMR" id="B0K7U2"/>
<dbReference type="STRING" id="340099.Teth39_0678"/>
<dbReference type="KEGG" id="tpd:Teth39_0678"/>
<dbReference type="eggNOG" id="COG1481">
    <property type="taxonomic scope" value="Bacteria"/>
</dbReference>
<dbReference type="HOGENOM" id="CLU_053282_0_0_9"/>
<dbReference type="Proteomes" id="UP000002156">
    <property type="component" value="Chromosome"/>
</dbReference>
<dbReference type="GO" id="GO:0003677">
    <property type="term" value="F:DNA binding"/>
    <property type="evidence" value="ECO:0007669"/>
    <property type="project" value="UniProtKB-UniRule"/>
</dbReference>
<dbReference type="GO" id="GO:0051301">
    <property type="term" value="P:cell division"/>
    <property type="evidence" value="ECO:0007669"/>
    <property type="project" value="UniProtKB-UniRule"/>
</dbReference>
<dbReference type="GO" id="GO:0043937">
    <property type="term" value="P:regulation of sporulation"/>
    <property type="evidence" value="ECO:0007669"/>
    <property type="project" value="InterPro"/>
</dbReference>
<dbReference type="Gene3D" id="3.10.28.10">
    <property type="entry name" value="Homing endonucleases"/>
    <property type="match status" value="1"/>
</dbReference>
<dbReference type="HAMAP" id="MF_01420">
    <property type="entry name" value="HTH_type_WhiA"/>
    <property type="match status" value="1"/>
</dbReference>
<dbReference type="InterPro" id="IPR027434">
    <property type="entry name" value="Homing_endonucl"/>
</dbReference>
<dbReference type="InterPro" id="IPR018478">
    <property type="entry name" value="Sporu_reg_WhiA_N_dom"/>
</dbReference>
<dbReference type="InterPro" id="IPR003802">
    <property type="entry name" value="Sporulation_regulator_WhiA"/>
</dbReference>
<dbReference type="InterPro" id="IPR023054">
    <property type="entry name" value="Sporulation_regulator_WhiA_C"/>
</dbReference>
<dbReference type="InterPro" id="IPR039518">
    <property type="entry name" value="WhiA_LAGLIDADG_dom"/>
</dbReference>
<dbReference type="NCBIfam" id="TIGR00647">
    <property type="entry name" value="DNA_bind_WhiA"/>
    <property type="match status" value="1"/>
</dbReference>
<dbReference type="PANTHER" id="PTHR37307">
    <property type="entry name" value="CELL DIVISION PROTEIN WHIA-RELATED"/>
    <property type="match status" value="1"/>
</dbReference>
<dbReference type="PANTHER" id="PTHR37307:SF1">
    <property type="entry name" value="CELL DIVISION PROTEIN WHIA-RELATED"/>
    <property type="match status" value="1"/>
</dbReference>
<dbReference type="Pfam" id="PF02650">
    <property type="entry name" value="HTH_WhiA"/>
    <property type="match status" value="1"/>
</dbReference>
<dbReference type="Pfam" id="PF14527">
    <property type="entry name" value="LAGLIDADG_WhiA"/>
    <property type="match status" value="1"/>
</dbReference>
<dbReference type="Pfam" id="PF10298">
    <property type="entry name" value="WhiA_N"/>
    <property type="match status" value="1"/>
</dbReference>
<dbReference type="SUPFAM" id="SSF55608">
    <property type="entry name" value="Homing endonucleases"/>
    <property type="match status" value="1"/>
</dbReference>
<keyword id="KW-0131">Cell cycle</keyword>
<keyword id="KW-0132">Cell division</keyword>
<keyword id="KW-0238">DNA-binding</keyword>
<keyword id="KW-1185">Reference proteome</keyword>